<dbReference type="EMBL" id="CP000826">
    <property type="protein sequence ID" value="ABV42921.1"/>
    <property type="molecule type" value="Genomic_DNA"/>
</dbReference>
<dbReference type="SMR" id="A8GII1"/>
<dbReference type="STRING" id="399741.Spro_3825"/>
<dbReference type="KEGG" id="spe:Spro_3825"/>
<dbReference type="eggNOG" id="COG3066">
    <property type="taxonomic scope" value="Bacteria"/>
</dbReference>
<dbReference type="HOGENOM" id="CLU_086669_0_0_6"/>
<dbReference type="OrthoDB" id="5634909at2"/>
<dbReference type="GO" id="GO:0005737">
    <property type="term" value="C:cytoplasm"/>
    <property type="evidence" value="ECO:0007669"/>
    <property type="project" value="UniProtKB-SubCell"/>
</dbReference>
<dbReference type="GO" id="GO:0003677">
    <property type="term" value="F:DNA binding"/>
    <property type="evidence" value="ECO:0007669"/>
    <property type="project" value="InterPro"/>
</dbReference>
<dbReference type="GO" id="GO:0004519">
    <property type="term" value="F:endonuclease activity"/>
    <property type="evidence" value="ECO:0007669"/>
    <property type="project" value="UniProtKB-UniRule"/>
</dbReference>
<dbReference type="GO" id="GO:0006304">
    <property type="term" value="P:DNA modification"/>
    <property type="evidence" value="ECO:0007669"/>
    <property type="project" value="InterPro"/>
</dbReference>
<dbReference type="GO" id="GO:0006298">
    <property type="term" value="P:mismatch repair"/>
    <property type="evidence" value="ECO:0007669"/>
    <property type="project" value="UniProtKB-UniRule"/>
</dbReference>
<dbReference type="CDD" id="cd00583">
    <property type="entry name" value="MutH-like"/>
    <property type="match status" value="1"/>
</dbReference>
<dbReference type="FunFam" id="3.40.600.10:FF:000001">
    <property type="entry name" value="DNA mismatch repair protein MutH"/>
    <property type="match status" value="1"/>
</dbReference>
<dbReference type="Gene3D" id="3.40.600.10">
    <property type="entry name" value="DNA mismatch repair MutH/Restriction endonuclease, type II"/>
    <property type="match status" value="1"/>
</dbReference>
<dbReference type="HAMAP" id="MF_00759">
    <property type="entry name" value="MutH"/>
    <property type="match status" value="1"/>
</dbReference>
<dbReference type="InterPro" id="IPR004230">
    <property type="entry name" value="DNA_mismatch_repair_MutH"/>
</dbReference>
<dbReference type="InterPro" id="IPR011337">
    <property type="entry name" value="DNA_rep_MutH/RE_typeII_Sau3AI"/>
</dbReference>
<dbReference type="InterPro" id="IPR037057">
    <property type="entry name" value="DNA_rep_MutH/T2_RE_sf"/>
</dbReference>
<dbReference type="InterPro" id="IPR011335">
    <property type="entry name" value="Restrct_endonuc-II-like"/>
</dbReference>
<dbReference type="NCBIfam" id="TIGR02248">
    <property type="entry name" value="mutH_TIGR"/>
    <property type="match status" value="1"/>
</dbReference>
<dbReference type="NCBIfam" id="NF003458">
    <property type="entry name" value="PRK05070.1"/>
    <property type="match status" value="1"/>
</dbReference>
<dbReference type="Pfam" id="PF02976">
    <property type="entry name" value="MutH"/>
    <property type="match status" value="1"/>
</dbReference>
<dbReference type="SMART" id="SM00927">
    <property type="entry name" value="MutH"/>
    <property type="match status" value="1"/>
</dbReference>
<dbReference type="SUPFAM" id="SSF52980">
    <property type="entry name" value="Restriction endonuclease-like"/>
    <property type="match status" value="1"/>
</dbReference>
<feature type="chain" id="PRO_1000062205" description="DNA mismatch repair protein MutH">
    <location>
        <begin position="1"/>
        <end position="228"/>
    </location>
</feature>
<comment type="function">
    <text evidence="1">Sequence-specific endonuclease that cleaves unmethylated GATC sequences. It is involved in DNA mismatch repair.</text>
</comment>
<comment type="subcellular location">
    <subcellularLocation>
        <location evidence="1">Cytoplasm</location>
    </subcellularLocation>
</comment>
<comment type="similarity">
    <text evidence="1">Belongs to the MutH family.</text>
</comment>
<evidence type="ECO:0000255" key="1">
    <source>
        <dbReference type="HAMAP-Rule" id="MF_00759"/>
    </source>
</evidence>
<protein>
    <recommendedName>
        <fullName evidence="1">DNA mismatch repair protein MutH</fullName>
    </recommendedName>
    <alternativeName>
        <fullName evidence="1">Methyl-directed mismatch repair protein</fullName>
    </alternativeName>
</protein>
<accession>A8GII1</accession>
<gene>
    <name evidence="1" type="primary">mutH</name>
    <name type="ordered locus">Spro_3825</name>
</gene>
<reference key="1">
    <citation type="submission" date="2007-09" db="EMBL/GenBank/DDBJ databases">
        <title>Complete sequence of chromosome of Serratia proteamaculans 568.</title>
        <authorList>
            <consortium name="US DOE Joint Genome Institute"/>
            <person name="Copeland A."/>
            <person name="Lucas S."/>
            <person name="Lapidus A."/>
            <person name="Barry K."/>
            <person name="Glavina del Rio T."/>
            <person name="Dalin E."/>
            <person name="Tice H."/>
            <person name="Pitluck S."/>
            <person name="Chain P."/>
            <person name="Malfatti S."/>
            <person name="Shin M."/>
            <person name="Vergez L."/>
            <person name="Schmutz J."/>
            <person name="Larimer F."/>
            <person name="Land M."/>
            <person name="Hauser L."/>
            <person name="Kyrpides N."/>
            <person name="Kim E."/>
            <person name="Taghavi S."/>
            <person name="Newman L."/>
            <person name="Vangronsveld J."/>
            <person name="van der Lelie D."/>
            <person name="Richardson P."/>
        </authorList>
    </citation>
    <scope>NUCLEOTIDE SEQUENCE [LARGE SCALE GENOMIC DNA]</scope>
    <source>
        <strain>568</strain>
    </source>
</reference>
<name>MUTH_SERP5</name>
<sequence>MAFLSPLPPPPENEQQLFERAQQLAGCSLGELAEGARLAIPRDLKRDKGWVGMLLEQYLGAMAGSKPEQDFPELGIELKTIPIDAAGKPLETTFVCVAPLTGNSGVTWASSHVRHKLARVLWIPVEGERQIPLAQRRIGSPLLWSPNAEEEEMLRRDWEELMDLIVLGHVERITARHGEVLQLRPKAANSKALTEAIGEQGQPILTLPRGFYLKKSFTGALLARHFFV</sequence>
<keyword id="KW-0963">Cytoplasm</keyword>
<keyword id="KW-0227">DNA damage</keyword>
<keyword id="KW-0234">DNA repair</keyword>
<keyword id="KW-0255">Endonuclease</keyword>
<keyword id="KW-0378">Hydrolase</keyword>
<keyword id="KW-0540">Nuclease</keyword>
<proteinExistence type="inferred from homology"/>
<organism>
    <name type="scientific">Serratia proteamaculans (strain 568)</name>
    <dbReference type="NCBI Taxonomy" id="399741"/>
    <lineage>
        <taxon>Bacteria</taxon>
        <taxon>Pseudomonadati</taxon>
        <taxon>Pseudomonadota</taxon>
        <taxon>Gammaproteobacteria</taxon>
        <taxon>Enterobacterales</taxon>
        <taxon>Yersiniaceae</taxon>
        <taxon>Serratia</taxon>
    </lineage>
</organism>